<dbReference type="EMBL" id="CP000569">
    <property type="protein sequence ID" value="ABN73309.1"/>
    <property type="molecule type" value="Genomic_DNA"/>
</dbReference>
<dbReference type="RefSeq" id="WP_005595979.1">
    <property type="nucleotide sequence ID" value="NC_009053.1"/>
</dbReference>
<dbReference type="SMR" id="A3MYS3"/>
<dbReference type="STRING" id="416269.APL_0201"/>
<dbReference type="EnsemblBacteria" id="ABN73309">
    <property type="protein sequence ID" value="ABN73309"/>
    <property type="gene ID" value="APL_0201"/>
</dbReference>
<dbReference type="GeneID" id="48598348"/>
<dbReference type="KEGG" id="apl:APL_0201"/>
<dbReference type="eggNOG" id="COG0781">
    <property type="taxonomic scope" value="Bacteria"/>
</dbReference>
<dbReference type="HOGENOM" id="CLU_087843_4_1_6"/>
<dbReference type="Proteomes" id="UP000001432">
    <property type="component" value="Chromosome"/>
</dbReference>
<dbReference type="GO" id="GO:0005829">
    <property type="term" value="C:cytosol"/>
    <property type="evidence" value="ECO:0007669"/>
    <property type="project" value="TreeGrafter"/>
</dbReference>
<dbReference type="GO" id="GO:0003723">
    <property type="term" value="F:RNA binding"/>
    <property type="evidence" value="ECO:0007669"/>
    <property type="project" value="UniProtKB-UniRule"/>
</dbReference>
<dbReference type="GO" id="GO:0006353">
    <property type="term" value="P:DNA-templated transcription termination"/>
    <property type="evidence" value="ECO:0007669"/>
    <property type="project" value="UniProtKB-UniRule"/>
</dbReference>
<dbReference type="GO" id="GO:0031564">
    <property type="term" value="P:transcription antitermination"/>
    <property type="evidence" value="ECO:0007669"/>
    <property type="project" value="UniProtKB-KW"/>
</dbReference>
<dbReference type="CDD" id="cd00619">
    <property type="entry name" value="Terminator_NusB"/>
    <property type="match status" value="1"/>
</dbReference>
<dbReference type="FunFam" id="1.10.940.10:FF:000001">
    <property type="entry name" value="Transcription antitermination factor NusB"/>
    <property type="match status" value="1"/>
</dbReference>
<dbReference type="Gene3D" id="1.10.940.10">
    <property type="entry name" value="NusB-like"/>
    <property type="match status" value="1"/>
</dbReference>
<dbReference type="HAMAP" id="MF_00073">
    <property type="entry name" value="NusB"/>
    <property type="match status" value="1"/>
</dbReference>
<dbReference type="InterPro" id="IPR035926">
    <property type="entry name" value="NusB-like_sf"/>
</dbReference>
<dbReference type="InterPro" id="IPR011605">
    <property type="entry name" value="NusB_fam"/>
</dbReference>
<dbReference type="InterPro" id="IPR006027">
    <property type="entry name" value="NusB_RsmB_TIM44"/>
</dbReference>
<dbReference type="NCBIfam" id="TIGR01951">
    <property type="entry name" value="nusB"/>
    <property type="match status" value="1"/>
</dbReference>
<dbReference type="PANTHER" id="PTHR11078:SF3">
    <property type="entry name" value="ANTITERMINATION NUSB DOMAIN-CONTAINING PROTEIN"/>
    <property type="match status" value="1"/>
</dbReference>
<dbReference type="PANTHER" id="PTHR11078">
    <property type="entry name" value="N UTILIZATION SUBSTANCE PROTEIN B-RELATED"/>
    <property type="match status" value="1"/>
</dbReference>
<dbReference type="Pfam" id="PF01029">
    <property type="entry name" value="NusB"/>
    <property type="match status" value="1"/>
</dbReference>
<dbReference type="SUPFAM" id="SSF48013">
    <property type="entry name" value="NusB-like"/>
    <property type="match status" value="1"/>
</dbReference>
<reference key="1">
    <citation type="journal article" date="2008" name="J. Bacteriol.">
        <title>The complete genome sequence of Actinobacillus pleuropneumoniae L20 (serotype 5b).</title>
        <authorList>
            <person name="Foote S.J."/>
            <person name="Bosse J.T."/>
            <person name="Bouevitch A.B."/>
            <person name="Langford P.R."/>
            <person name="Young N.M."/>
            <person name="Nash J.H.E."/>
        </authorList>
    </citation>
    <scope>NUCLEOTIDE SEQUENCE [LARGE SCALE GENOMIC DNA]</scope>
    <source>
        <strain>L20</strain>
    </source>
</reference>
<comment type="function">
    <text evidence="1">Involved in transcription antitermination. Required for transcription of ribosomal RNA (rRNA) genes. Binds specifically to the boxA antiterminator sequence of the ribosomal RNA (rrn) operons.</text>
</comment>
<comment type="similarity">
    <text evidence="1">Belongs to the NusB family.</text>
</comment>
<accession>A3MYS3</accession>
<feature type="chain" id="PRO_1000023702" description="Transcription antitermination protein NusB">
    <location>
        <begin position="1"/>
        <end position="137"/>
    </location>
</feature>
<proteinExistence type="inferred from homology"/>
<organism>
    <name type="scientific">Actinobacillus pleuropneumoniae serotype 5b (strain L20)</name>
    <dbReference type="NCBI Taxonomy" id="416269"/>
    <lineage>
        <taxon>Bacteria</taxon>
        <taxon>Pseudomonadati</taxon>
        <taxon>Pseudomonadota</taxon>
        <taxon>Gammaproteobacteria</taxon>
        <taxon>Pasteurellales</taxon>
        <taxon>Pasteurellaceae</taxon>
        <taxon>Actinobacillus</taxon>
    </lineage>
</organism>
<name>NUSB_ACTP2</name>
<keyword id="KW-1185">Reference proteome</keyword>
<keyword id="KW-0694">RNA-binding</keyword>
<keyword id="KW-0804">Transcription</keyword>
<keyword id="KW-0889">Transcription antitermination</keyword>
<keyword id="KW-0805">Transcription regulation</keyword>
<evidence type="ECO:0000255" key="1">
    <source>
        <dbReference type="HAMAP-Rule" id="MF_00073"/>
    </source>
</evidence>
<gene>
    <name evidence="1" type="primary">nusB</name>
    <name type="ordered locus">APL_0201</name>
</gene>
<sequence length="137" mass="15771">MKVSPRRRARECAVQALYSWYVSQNSVEEVELSFVTDQDMNGVDLPYFRKLLRGTVLYVEAIDNDLRPFLDRAEDEVDPIERTILRLSAYELKYELDVPYKVVINEGIEVAKVFGSDDSHKYINGILDKLAPALGRK</sequence>
<protein>
    <recommendedName>
        <fullName evidence="1">Transcription antitermination protein NusB</fullName>
    </recommendedName>
    <alternativeName>
        <fullName evidence="1">Antitermination factor NusB</fullName>
    </alternativeName>
</protein>